<organism>
    <name type="scientific">Thermus thermophilus</name>
    <dbReference type="NCBI Taxonomy" id="274"/>
    <lineage>
        <taxon>Bacteria</taxon>
        <taxon>Thermotogati</taxon>
        <taxon>Deinococcota</taxon>
        <taxon>Deinococci</taxon>
        <taxon>Thermales</taxon>
        <taxon>Thermaceae</taxon>
        <taxon>Thermus</taxon>
    </lineage>
</organism>
<evidence type="ECO:0000250" key="1"/>
<evidence type="ECO:0000305" key="2"/>
<evidence type="ECO:0007829" key="3">
    <source>
        <dbReference type="PDB" id="1LOU"/>
    </source>
</evidence>
<accession>P23370</accession>
<comment type="function">
    <text evidence="1">Located on the outer edge of the platform on the body of the 30S subunit.</text>
</comment>
<comment type="subunit">
    <text evidence="1">Part of the 30S ribosomal subunit. Forms a tight heterodimer with protein bS18 (By similarity).</text>
</comment>
<comment type="similarity">
    <text evidence="2">Belongs to the bacterial ribosomal protein bS6 family.</text>
</comment>
<feature type="chain" id="PRO_0000176864" description="Small ribosomal subunit protein bS6">
    <location>
        <begin position="1"/>
        <end position="101"/>
    </location>
</feature>
<feature type="strand" evidence="3">
    <location>
        <begin position="2"/>
        <end position="10"/>
    </location>
</feature>
<feature type="helix" evidence="3">
    <location>
        <begin position="16"/>
        <end position="32"/>
    </location>
</feature>
<feature type="strand" evidence="3">
    <location>
        <begin position="36"/>
        <end position="52"/>
    </location>
</feature>
<feature type="strand" evidence="3">
    <location>
        <begin position="55"/>
        <end position="67"/>
    </location>
</feature>
<feature type="helix" evidence="3">
    <location>
        <begin position="69"/>
        <end position="71"/>
    </location>
</feature>
<feature type="helix" evidence="3">
    <location>
        <begin position="72"/>
        <end position="80"/>
    </location>
</feature>
<feature type="strand" evidence="3">
    <location>
        <begin position="85"/>
        <end position="92"/>
    </location>
</feature>
<gene>
    <name type="primary">rpsF</name>
    <name type="synonym">rps6</name>
</gene>
<name>RS6_THETH</name>
<reference key="1">
    <citation type="submission" date="1999-04" db="EMBL/GenBank/DDBJ databases">
        <title>Sequencing and analysis of the Thermus thermophilus gene cluster equivalent to the S6 operon.</title>
        <authorList>
            <person name="Shcherbakov D.V."/>
            <person name="Cherepanova E.A."/>
            <person name="Garber M.B."/>
        </authorList>
    </citation>
    <scope>NUCLEOTIDE SEQUENCE [GENOMIC DNA]</scope>
    <source>
        <strain>VK1</strain>
    </source>
</reference>
<reference key="2">
    <citation type="journal article" date="1991" name="J. Mol. Biol.">
        <title>Crystals of protein S6 from the 30 S ribosomal subunit of Thermus thermophilus.</title>
        <authorList>
            <person name="Sedelnikova S.E."/>
            <person name="Agalarov S.C."/>
            <person name="Eliseikina I.A."/>
            <person name="Fomenkova N.P."/>
            <person name="Nikonov S.V."/>
            <person name="Garber M.B."/>
            <person name="Svensson L.A."/>
            <person name="Liljas A."/>
        </authorList>
    </citation>
    <scope>PROTEIN SEQUENCE OF 1-24</scope>
</reference>
<reference key="3">
    <citation type="journal article" date="1992" name="Biochimie">
        <title>Ribosomal proteins from Thermus thermophilus for structural investigations.</title>
        <authorList>
            <person name="Garber M.B."/>
            <person name="Agalarov S.C."/>
            <person name="Eliseikina I.A."/>
            <person name="Fomenkova N.P."/>
            <person name="Nikonov S.V."/>
            <person name="Sedelnikova S.E."/>
            <person name="Shikaeva O.S."/>
            <person name="Vasiliev D."/>
            <person name="Zhdanov A.S."/>
            <person name="Liljas A."/>
            <person name="Svensson L.A."/>
        </authorList>
    </citation>
    <scope>PROTEIN SEQUENCE OF 1-24</scope>
</reference>
<reference key="4">
    <citation type="journal article" date="1994" name="EMBO J.">
        <title>Crystal structure of the ribosomal protein S6 from Thermus thermophilus.</title>
        <authorList>
            <person name="Lindahl M."/>
            <person name="Svensson L.A."/>
            <person name="Liljas A."/>
            <person name="Sedelnikova S.E."/>
            <person name="Eliseikina I.A."/>
            <person name="Fomenkova N.P."/>
            <person name="Nevskaya N."/>
            <person name="Nikonov S.V."/>
            <person name="Garber M.B."/>
            <person name="Muranova T.A."/>
            <person name="Rykonova A.I."/>
            <person name="Amons R."/>
        </authorList>
    </citation>
    <scope>X-RAY CRYSTALLOGRAPHY (2.0 ANGSTROMS)</scope>
    <source>
        <strain>VK1</strain>
    </source>
</reference>
<reference key="5">
    <citation type="journal article" date="1999" name="Biochemistry">
        <title>Structural changes in the transition state of protein folding: alternative interpretations of curved chevron plots.</title>
        <authorList>
            <person name="Otzen D.E."/>
            <person name="Kristensen O."/>
            <person name="Proctor M."/>
            <person name="Oliveberg M."/>
        </authorList>
    </citation>
    <scope>X-RAY CRYSTALLOGRAPHY (1.95 ANGSTROMS)</scope>
    <source>
        <strain>VK1</strain>
    </source>
</reference>
<proteinExistence type="evidence at protein level"/>
<dbReference type="EMBL" id="AF146075">
    <property type="protein sequence ID" value="AAF27295.1"/>
    <property type="molecule type" value="Genomic_DNA"/>
</dbReference>
<dbReference type="RefSeq" id="WP_011174099.1">
    <property type="nucleotide sequence ID" value="NZ_VHHQ01000027.1"/>
</dbReference>
<dbReference type="PDB" id="1CQM">
    <property type="method" value="X-ray"/>
    <property type="resolution" value="1.65 A"/>
    <property type="chains" value="A/B=1-101"/>
</dbReference>
<dbReference type="PDB" id="1CQN">
    <property type="method" value="X-ray"/>
    <property type="resolution" value="2.10 A"/>
    <property type="chains" value="A/B=1-101"/>
</dbReference>
<dbReference type="PDB" id="1LOU">
    <property type="method" value="X-ray"/>
    <property type="resolution" value="1.95 A"/>
    <property type="chains" value="A=1-101"/>
</dbReference>
<dbReference type="PDB" id="1QJH">
    <property type="method" value="X-ray"/>
    <property type="resolution" value="2.20 A"/>
    <property type="chains" value="A=1-101"/>
</dbReference>
<dbReference type="PDB" id="1RIS">
    <property type="method" value="X-ray"/>
    <property type="resolution" value="2.00 A"/>
    <property type="chains" value="A=1-101"/>
</dbReference>
<dbReference type="PDB" id="2BVZ">
    <property type="method" value="X-ray"/>
    <property type="resolution" value="2.20 A"/>
    <property type="chains" value="A=1-101"/>
</dbReference>
<dbReference type="PDB" id="2BXJ">
    <property type="method" value="X-ray"/>
    <property type="resolution" value="2.40 A"/>
    <property type="chains" value="A/B=1-101"/>
</dbReference>
<dbReference type="PDB" id="4V8X">
    <property type="method" value="X-ray"/>
    <property type="resolution" value="3.35 A"/>
    <property type="chains" value="AF/CF=1-101"/>
</dbReference>
<dbReference type="PDBsum" id="1CQM"/>
<dbReference type="PDBsum" id="1CQN"/>
<dbReference type="PDBsum" id="1LOU"/>
<dbReference type="PDBsum" id="1QJH"/>
<dbReference type="PDBsum" id="1RIS"/>
<dbReference type="PDBsum" id="2BVZ"/>
<dbReference type="PDBsum" id="2BXJ"/>
<dbReference type="PDBsum" id="4V8X"/>
<dbReference type="BMRB" id="P23370"/>
<dbReference type="SMR" id="P23370"/>
<dbReference type="DIP" id="DIP-6173N"/>
<dbReference type="GeneID" id="3168355"/>
<dbReference type="OMA" id="YYLMYTI"/>
<dbReference type="EvolutionaryTrace" id="P23370"/>
<dbReference type="GO" id="GO:0005737">
    <property type="term" value="C:cytoplasm"/>
    <property type="evidence" value="ECO:0007669"/>
    <property type="project" value="UniProtKB-ARBA"/>
</dbReference>
<dbReference type="GO" id="GO:1990904">
    <property type="term" value="C:ribonucleoprotein complex"/>
    <property type="evidence" value="ECO:0007669"/>
    <property type="project" value="UniProtKB-KW"/>
</dbReference>
<dbReference type="GO" id="GO:0005840">
    <property type="term" value="C:ribosome"/>
    <property type="evidence" value="ECO:0007669"/>
    <property type="project" value="UniProtKB-KW"/>
</dbReference>
<dbReference type="GO" id="GO:0070181">
    <property type="term" value="F:small ribosomal subunit rRNA binding"/>
    <property type="evidence" value="ECO:0007669"/>
    <property type="project" value="TreeGrafter"/>
</dbReference>
<dbReference type="GO" id="GO:0003735">
    <property type="term" value="F:structural constituent of ribosome"/>
    <property type="evidence" value="ECO:0007669"/>
    <property type="project" value="InterPro"/>
</dbReference>
<dbReference type="GO" id="GO:0006412">
    <property type="term" value="P:translation"/>
    <property type="evidence" value="ECO:0007669"/>
    <property type="project" value="UniProtKB-UniRule"/>
</dbReference>
<dbReference type="CDD" id="cd00473">
    <property type="entry name" value="bS6"/>
    <property type="match status" value="1"/>
</dbReference>
<dbReference type="Gene3D" id="3.30.70.60">
    <property type="match status" value="2"/>
</dbReference>
<dbReference type="HAMAP" id="MF_00360">
    <property type="entry name" value="Ribosomal_bS6"/>
    <property type="match status" value="1"/>
</dbReference>
<dbReference type="InterPro" id="IPR000529">
    <property type="entry name" value="Ribosomal_bS6"/>
</dbReference>
<dbReference type="InterPro" id="IPR020815">
    <property type="entry name" value="Ribosomal_bS6_CS"/>
</dbReference>
<dbReference type="InterPro" id="IPR035980">
    <property type="entry name" value="Ribosomal_bS6_sf"/>
</dbReference>
<dbReference type="InterPro" id="IPR020814">
    <property type="entry name" value="Ribosomal_S6_plastid/chlpt"/>
</dbReference>
<dbReference type="InterPro" id="IPR014717">
    <property type="entry name" value="Transl_elong_EF1B/ribsomal_bS6"/>
</dbReference>
<dbReference type="NCBIfam" id="TIGR00166">
    <property type="entry name" value="S6"/>
    <property type="match status" value="1"/>
</dbReference>
<dbReference type="PANTHER" id="PTHR21011">
    <property type="entry name" value="MITOCHONDRIAL 28S RIBOSOMAL PROTEIN S6"/>
    <property type="match status" value="1"/>
</dbReference>
<dbReference type="PANTHER" id="PTHR21011:SF1">
    <property type="entry name" value="SMALL RIBOSOMAL SUBUNIT PROTEIN BS6M"/>
    <property type="match status" value="1"/>
</dbReference>
<dbReference type="Pfam" id="PF01250">
    <property type="entry name" value="Ribosomal_S6"/>
    <property type="match status" value="1"/>
</dbReference>
<dbReference type="SUPFAM" id="SSF54995">
    <property type="entry name" value="Ribosomal protein S6"/>
    <property type="match status" value="1"/>
</dbReference>
<dbReference type="PROSITE" id="PS01048">
    <property type="entry name" value="RIBOSOMAL_S6"/>
    <property type="match status" value="1"/>
</dbReference>
<sequence>MRRYEVNIVLNPNLDQSQLALEKEIIQRALENYGARVEKVEELGLRRLAYPIAKDPQGYFLWYQVEMPEDRVNDLARELRIRDNVRRVMVVKSQEPFLANA</sequence>
<protein>
    <recommendedName>
        <fullName evidence="2">Small ribosomal subunit protein bS6</fullName>
    </recommendedName>
    <alternativeName>
        <fullName>30S ribosomal protein S6</fullName>
    </alternativeName>
    <alternativeName>
        <fullName>TS9</fullName>
    </alternativeName>
</protein>
<keyword id="KW-0002">3D-structure</keyword>
<keyword id="KW-0903">Direct protein sequencing</keyword>
<keyword id="KW-0687">Ribonucleoprotein</keyword>
<keyword id="KW-0689">Ribosomal protein</keyword>
<keyword id="KW-0694">RNA-binding</keyword>
<keyword id="KW-0699">rRNA-binding</keyword>